<comment type="function">
    <text evidence="1">Catalyzes a proton abstraction reaction that results in 2,5-elimination of pyruvate from 2-succinyl-5-enolpyruvyl-6-hydroxy-3-cyclohexene-1-carboxylate (SEPHCHC) and the formation of 2-succinyl-6-hydroxy-2,4-cyclohexadiene-1-carboxylate (SHCHC).</text>
</comment>
<comment type="catalytic activity">
    <reaction evidence="1">
        <text>5-enolpyruvoyl-6-hydroxy-2-succinyl-cyclohex-3-ene-1-carboxylate = (1R,6R)-6-hydroxy-2-succinyl-cyclohexa-2,4-diene-1-carboxylate + pyruvate</text>
        <dbReference type="Rhea" id="RHEA:25597"/>
        <dbReference type="ChEBI" id="CHEBI:15361"/>
        <dbReference type="ChEBI" id="CHEBI:58689"/>
        <dbReference type="ChEBI" id="CHEBI:58818"/>
        <dbReference type="EC" id="4.2.99.20"/>
    </reaction>
</comment>
<comment type="pathway">
    <text evidence="1">Quinol/quinone metabolism; 1,4-dihydroxy-2-naphthoate biosynthesis; 1,4-dihydroxy-2-naphthoate from chorismate: step 3/7.</text>
</comment>
<comment type="pathway">
    <text evidence="1">Quinol/quinone metabolism; menaquinone biosynthesis.</text>
</comment>
<comment type="subunit">
    <text evidence="1">Monomer.</text>
</comment>
<comment type="similarity">
    <text evidence="1">Belongs to the AB hydrolase superfamily. MenH family.</text>
</comment>
<accession>B5RCD3</accession>
<keyword id="KW-0456">Lyase</keyword>
<keyword id="KW-0474">Menaquinone biosynthesis</keyword>
<dbReference type="EC" id="4.2.99.20" evidence="1"/>
<dbReference type="EMBL" id="AM933173">
    <property type="protein sequence ID" value="CAR38167.1"/>
    <property type="molecule type" value="Genomic_DNA"/>
</dbReference>
<dbReference type="RefSeq" id="WP_000979132.1">
    <property type="nucleotide sequence ID" value="NC_011274.1"/>
</dbReference>
<dbReference type="SMR" id="B5RCD3"/>
<dbReference type="ESTHER" id="salty-YFBB">
    <property type="family name" value="MenH_SHCHC"/>
</dbReference>
<dbReference type="KEGG" id="seg:SG2337"/>
<dbReference type="HOGENOM" id="CLU_020336_38_2_6"/>
<dbReference type="UniPathway" id="UPA00079"/>
<dbReference type="UniPathway" id="UPA01057">
    <property type="reaction ID" value="UER00900"/>
</dbReference>
<dbReference type="Proteomes" id="UP000008321">
    <property type="component" value="Chromosome"/>
</dbReference>
<dbReference type="GO" id="GO:0070205">
    <property type="term" value="F:2-succinyl-6-hydroxy-2,4-cyclohexadiene-1-carboxylate synthase activity"/>
    <property type="evidence" value="ECO:0007669"/>
    <property type="project" value="UniProtKB-UniRule"/>
</dbReference>
<dbReference type="GO" id="GO:0009234">
    <property type="term" value="P:menaquinone biosynthetic process"/>
    <property type="evidence" value="ECO:0007669"/>
    <property type="project" value="UniProtKB-UniRule"/>
</dbReference>
<dbReference type="Gene3D" id="3.40.50.1820">
    <property type="entry name" value="alpha/beta hydrolase"/>
    <property type="match status" value="1"/>
</dbReference>
<dbReference type="HAMAP" id="MF_01660">
    <property type="entry name" value="MenH"/>
    <property type="match status" value="1"/>
</dbReference>
<dbReference type="InterPro" id="IPR000073">
    <property type="entry name" value="AB_hydrolase_1"/>
</dbReference>
<dbReference type="InterPro" id="IPR029058">
    <property type="entry name" value="AB_hydrolase_fold"/>
</dbReference>
<dbReference type="InterPro" id="IPR022485">
    <property type="entry name" value="SHCHC_synthase_MenH"/>
</dbReference>
<dbReference type="NCBIfam" id="TIGR03695">
    <property type="entry name" value="menH_SHCHC"/>
    <property type="match status" value="1"/>
</dbReference>
<dbReference type="NCBIfam" id="NF008340">
    <property type="entry name" value="PRK11126.1"/>
    <property type="match status" value="1"/>
</dbReference>
<dbReference type="PANTHER" id="PTHR42916">
    <property type="entry name" value="2-SUCCINYL-5-ENOLPYRUVYL-6-HYDROXY-3-CYCLOHEXENE-1-CARBOXYLATE SYNTHASE"/>
    <property type="match status" value="1"/>
</dbReference>
<dbReference type="PANTHER" id="PTHR42916:SF1">
    <property type="entry name" value="PROTEIN PHYLLO, CHLOROPLASTIC"/>
    <property type="match status" value="1"/>
</dbReference>
<dbReference type="Pfam" id="PF12697">
    <property type="entry name" value="Abhydrolase_6"/>
    <property type="match status" value="1"/>
</dbReference>
<dbReference type="SUPFAM" id="SSF53474">
    <property type="entry name" value="alpha/beta-Hydrolases"/>
    <property type="match status" value="1"/>
</dbReference>
<reference key="1">
    <citation type="journal article" date="2008" name="Genome Res.">
        <title>Comparative genome analysis of Salmonella enteritidis PT4 and Salmonella gallinarum 287/91 provides insights into evolutionary and host adaptation pathways.</title>
        <authorList>
            <person name="Thomson N.R."/>
            <person name="Clayton D.J."/>
            <person name="Windhorst D."/>
            <person name="Vernikos G."/>
            <person name="Davidson S."/>
            <person name="Churcher C."/>
            <person name="Quail M.A."/>
            <person name="Stevens M."/>
            <person name="Jones M.A."/>
            <person name="Watson M."/>
            <person name="Barron A."/>
            <person name="Layton A."/>
            <person name="Pickard D."/>
            <person name="Kingsley R.A."/>
            <person name="Bignell A."/>
            <person name="Clark L."/>
            <person name="Harris B."/>
            <person name="Ormond D."/>
            <person name="Abdellah Z."/>
            <person name="Brooks K."/>
            <person name="Cherevach I."/>
            <person name="Chillingworth T."/>
            <person name="Woodward J."/>
            <person name="Norberczak H."/>
            <person name="Lord A."/>
            <person name="Arrowsmith C."/>
            <person name="Jagels K."/>
            <person name="Moule S."/>
            <person name="Mungall K."/>
            <person name="Saunders M."/>
            <person name="Whitehead S."/>
            <person name="Chabalgoity J.A."/>
            <person name="Maskell D."/>
            <person name="Humphreys T."/>
            <person name="Roberts M."/>
            <person name="Barrow P.A."/>
            <person name="Dougan G."/>
            <person name="Parkhill J."/>
        </authorList>
    </citation>
    <scope>NUCLEOTIDE SEQUENCE [LARGE SCALE GENOMIC DNA]</scope>
    <source>
        <strain>287/91 / NCTC 13346</strain>
    </source>
</reference>
<proteinExistence type="inferred from homology"/>
<evidence type="ECO:0000255" key="1">
    <source>
        <dbReference type="HAMAP-Rule" id="MF_01660"/>
    </source>
</evidence>
<name>MENH_SALG2</name>
<organism>
    <name type="scientific">Salmonella gallinarum (strain 287/91 / NCTC 13346)</name>
    <dbReference type="NCBI Taxonomy" id="550538"/>
    <lineage>
        <taxon>Bacteria</taxon>
        <taxon>Pseudomonadati</taxon>
        <taxon>Pseudomonadota</taxon>
        <taxon>Gammaproteobacteria</taxon>
        <taxon>Enterobacterales</taxon>
        <taxon>Enterobacteriaceae</taxon>
        <taxon>Salmonella</taxon>
    </lineage>
</organism>
<sequence>MMLHAQHMPGQPGAPSLVFLHGFSGDCREWQPVGEQFHGCSRLYIDLPGHGGSAAIPVGGFADVIRLLRATLISYNILKFWLVGYSLGGRVAMMAACQGIPGLCGLVVEGGHPGLQNEQARAERRLSDGRWAERFRHEPLTEVFHDWYQQPVFASLTAQQRQALTALRSQNNGETLAAMLEATSLAVQPDLREALNALAFPFYYLCGERDSKFRALAQEVAATCHVIRNAGHNAHRENPAGVVDSLAQILRL</sequence>
<feature type="chain" id="PRO_1000187117" description="2-succinyl-6-hydroxy-2,4-cyclohexadiene-1-carboxylate synthase">
    <location>
        <begin position="1"/>
        <end position="252"/>
    </location>
</feature>
<protein>
    <recommendedName>
        <fullName evidence="1">2-succinyl-6-hydroxy-2,4-cyclohexadiene-1-carboxylate synthase</fullName>
        <shortName evidence="1">SHCHC synthase</shortName>
        <ecNumber evidence="1">4.2.99.20</ecNumber>
    </recommendedName>
</protein>
<gene>
    <name evidence="1" type="primary">menH</name>
    <name type="ordered locus">SG2337</name>
</gene>